<keyword id="KW-0067">ATP-binding</keyword>
<keyword id="KW-0093">Biotin biosynthesis</keyword>
<keyword id="KW-0963">Cytoplasm</keyword>
<keyword id="KW-0436">Ligase</keyword>
<keyword id="KW-0460">Magnesium</keyword>
<keyword id="KW-0479">Metal-binding</keyword>
<keyword id="KW-0547">Nucleotide-binding</keyword>
<keyword id="KW-1185">Reference proteome</keyword>
<reference key="1">
    <citation type="submission" date="2008-08" db="EMBL/GenBank/DDBJ databases">
        <title>The complete genome sequence of Thermodesulfovibrio yellowstonii strain ATCC 51303 / DSM 11347 / YP87.</title>
        <authorList>
            <person name="Dodson R.J."/>
            <person name="Durkin A.S."/>
            <person name="Wu M."/>
            <person name="Eisen J."/>
            <person name="Sutton G."/>
        </authorList>
    </citation>
    <scope>NUCLEOTIDE SEQUENCE [LARGE SCALE GENOMIC DNA]</scope>
    <source>
        <strain>ATCC 51303 / DSM 11347 / YP87</strain>
    </source>
</reference>
<protein>
    <recommendedName>
        <fullName evidence="1">ATP-dependent dethiobiotin synthetase BioD</fullName>
        <ecNumber evidence="1">6.3.3.3</ecNumber>
    </recommendedName>
    <alternativeName>
        <fullName evidence="1">DTB synthetase</fullName>
        <shortName evidence="1">DTBS</shortName>
    </alternativeName>
    <alternativeName>
        <fullName evidence="1">Dethiobiotin synthase</fullName>
    </alternativeName>
</protein>
<evidence type="ECO:0000255" key="1">
    <source>
        <dbReference type="HAMAP-Rule" id="MF_00336"/>
    </source>
</evidence>
<comment type="function">
    <text evidence="1">Catalyzes a mechanistically unusual reaction, the ATP-dependent insertion of CO2 between the N7 and N8 nitrogen atoms of 7,8-diaminopelargonic acid (DAPA, also called 7,8-diammoniononanoate) to form a ureido ring.</text>
</comment>
<comment type="catalytic activity">
    <reaction evidence="1">
        <text>(7R,8S)-7,8-diammoniononanoate + CO2 + ATP = (4R,5S)-dethiobiotin + ADP + phosphate + 3 H(+)</text>
        <dbReference type="Rhea" id="RHEA:15805"/>
        <dbReference type="ChEBI" id="CHEBI:15378"/>
        <dbReference type="ChEBI" id="CHEBI:16526"/>
        <dbReference type="ChEBI" id="CHEBI:30616"/>
        <dbReference type="ChEBI" id="CHEBI:43474"/>
        <dbReference type="ChEBI" id="CHEBI:149469"/>
        <dbReference type="ChEBI" id="CHEBI:149473"/>
        <dbReference type="ChEBI" id="CHEBI:456216"/>
        <dbReference type="EC" id="6.3.3.3"/>
    </reaction>
</comment>
<comment type="cofactor">
    <cofactor evidence="1">
        <name>Mg(2+)</name>
        <dbReference type="ChEBI" id="CHEBI:18420"/>
    </cofactor>
</comment>
<comment type="pathway">
    <text evidence="1">Cofactor biosynthesis; biotin biosynthesis; biotin from 7,8-diaminononanoate: step 1/2.</text>
</comment>
<comment type="subunit">
    <text evidence="1">Homodimer.</text>
</comment>
<comment type="subcellular location">
    <subcellularLocation>
        <location evidence="1">Cytoplasm</location>
    </subcellularLocation>
</comment>
<comment type="similarity">
    <text evidence="1">Belongs to the dethiobiotin synthetase family.</text>
</comment>
<dbReference type="EC" id="6.3.3.3" evidence="1"/>
<dbReference type="EMBL" id="CP001147">
    <property type="protein sequence ID" value="ACI20770.1"/>
    <property type="molecule type" value="Genomic_DNA"/>
</dbReference>
<dbReference type="RefSeq" id="WP_012545503.1">
    <property type="nucleotide sequence ID" value="NC_011296.1"/>
</dbReference>
<dbReference type="RefSeq" id="YP_002249665.1">
    <property type="nucleotide sequence ID" value="NC_011296.1"/>
</dbReference>
<dbReference type="SMR" id="B5YHS9"/>
<dbReference type="FunCoup" id="B5YHS9">
    <property type="interactions" value="376"/>
</dbReference>
<dbReference type="STRING" id="289376.THEYE_A1875"/>
<dbReference type="EnsemblBacteria" id="ACI20770">
    <property type="protein sequence ID" value="ACI20770"/>
    <property type="gene ID" value="THEYE_A1875"/>
</dbReference>
<dbReference type="KEGG" id="tye:THEYE_A1875"/>
<dbReference type="PATRIC" id="fig|289376.4.peg.1831"/>
<dbReference type="eggNOG" id="COG0132">
    <property type="taxonomic scope" value="Bacteria"/>
</dbReference>
<dbReference type="HOGENOM" id="CLU_072551_3_1_0"/>
<dbReference type="InParanoid" id="B5YHS9"/>
<dbReference type="OrthoDB" id="9802097at2"/>
<dbReference type="UniPathway" id="UPA00078">
    <property type="reaction ID" value="UER00161"/>
</dbReference>
<dbReference type="Proteomes" id="UP000000718">
    <property type="component" value="Chromosome"/>
</dbReference>
<dbReference type="GO" id="GO:0005829">
    <property type="term" value="C:cytosol"/>
    <property type="evidence" value="ECO:0000318"/>
    <property type="project" value="GO_Central"/>
</dbReference>
<dbReference type="GO" id="GO:0005524">
    <property type="term" value="F:ATP binding"/>
    <property type="evidence" value="ECO:0007669"/>
    <property type="project" value="UniProtKB-UniRule"/>
</dbReference>
<dbReference type="GO" id="GO:0004141">
    <property type="term" value="F:dethiobiotin synthase activity"/>
    <property type="evidence" value="ECO:0000318"/>
    <property type="project" value="GO_Central"/>
</dbReference>
<dbReference type="GO" id="GO:0000287">
    <property type="term" value="F:magnesium ion binding"/>
    <property type="evidence" value="ECO:0007669"/>
    <property type="project" value="UniProtKB-UniRule"/>
</dbReference>
<dbReference type="GO" id="GO:0009102">
    <property type="term" value="P:biotin biosynthetic process"/>
    <property type="evidence" value="ECO:0000318"/>
    <property type="project" value="GO_Central"/>
</dbReference>
<dbReference type="CDD" id="cd03109">
    <property type="entry name" value="DTBS"/>
    <property type="match status" value="1"/>
</dbReference>
<dbReference type="FunFam" id="3.40.50.300:FF:000292">
    <property type="entry name" value="ATP-dependent dethiobiotin synthetase BioD"/>
    <property type="match status" value="1"/>
</dbReference>
<dbReference type="Gene3D" id="3.40.50.300">
    <property type="entry name" value="P-loop containing nucleotide triphosphate hydrolases"/>
    <property type="match status" value="1"/>
</dbReference>
<dbReference type="HAMAP" id="MF_00336">
    <property type="entry name" value="BioD"/>
    <property type="match status" value="1"/>
</dbReference>
<dbReference type="InterPro" id="IPR004472">
    <property type="entry name" value="DTB_synth_BioD"/>
</dbReference>
<dbReference type="InterPro" id="IPR027417">
    <property type="entry name" value="P-loop_NTPase"/>
</dbReference>
<dbReference type="NCBIfam" id="TIGR00347">
    <property type="entry name" value="bioD"/>
    <property type="match status" value="1"/>
</dbReference>
<dbReference type="PANTHER" id="PTHR43210:SF2">
    <property type="entry name" value="ATP-DEPENDENT DETHIOBIOTIN SYNTHETASE BIOD 2"/>
    <property type="match status" value="1"/>
</dbReference>
<dbReference type="PANTHER" id="PTHR43210">
    <property type="entry name" value="DETHIOBIOTIN SYNTHETASE"/>
    <property type="match status" value="1"/>
</dbReference>
<dbReference type="Pfam" id="PF13500">
    <property type="entry name" value="AAA_26"/>
    <property type="match status" value="1"/>
</dbReference>
<dbReference type="PIRSF" id="PIRSF006755">
    <property type="entry name" value="DTB_synth"/>
    <property type="match status" value="1"/>
</dbReference>
<dbReference type="SUPFAM" id="SSF52540">
    <property type="entry name" value="P-loop containing nucleoside triphosphate hydrolases"/>
    <property type="match status" value="1"/>
</dbReference>
<accession>B5YHS9</accession>
<organism>
    <name type="scientific">Thermodesulfovibrio yellowstonii (strain ATCC 51303 / DSM 11347 / YP87)</name>
    <dbReference type="NCBI Taxonomy" id="289376"/>
    <lineage>
        <taxon>Bacteria</taxon>
        <taxon>Pseudomonadati</taxon>
        <taxon>Nitrospirota</taxon>
        <taxon>Thermodesulfovibrionia</taxon>
        <taxon>Thermodesulfovibrionales</taxon>
        <taxon>Thermodesulfovibrionaceae</taxon>
        <taxon>Thermodesulfovibrio</taxon>
    </lineage>
</organism>
<sequence>MKAGYFITGTDTGVGKTIVTSAILRSFIKKGLKVGAMKVIETGCLNKDGILLPSDGMLLRDMAEMNDSLDLITPIKLENPLSPLVASRIEEIEVDIERIFRAFETLQKKYDYLLVEGVGGLMVPLNKEEKKKSMFYFVRDLIKDMGLPVILVTRPTLGTINHTLLTLEALKNKKISVKGYIINFSEPAKNDIAEKTNPQVLKELVDVPCLGILPYLTELNKDKIGETAIKNFDIEALISL</sequence>
<name>BIOD_THEYD</name>
<gene>
    <name evidence="1" type="primary">bioD</name>
    <name type="ordered locus">THEYE_A1875</name>
</gene>
<proteinExistence type="inferred from homology"/>
<feature type="chain" id="PRO_1000119884" description="ATP-dependent dethiobiotin synthetase BioD">
    <location>
        <begin position="1"/>
        <end position="240"/>
    </location>
</feature>
<feature type="active site" evidence="1">
    <location>
        <position position="38"/>
    </location>
</feature>
<feature type="binding site" evidence="1">
    <location>
        <begin position="13"/>
        <end position="18"/>
    </location>
    <ligand>
        <name>ATP</name>
        <dbReference type="ChEBI" id="CHEBI:30616"/>
    </ligand>
</feature>
<feature type="binding site" evidence="1">
    <location>
        <position position="17"/>
    </location>
    <ligand>
        <name>Mg(2+)</name>
        <dbReference type="ChEBI" id="CHEBI:18420"/>
    </ligand>
</feature>
<feature type="binding site" evidence="1">
    <location>
        <position position="42"/>
    </location>
    <ligand>
        <name>substrate</name>
    </ligand>
</feature>
<feature type="binding site" evidence="1">
    <location>
        <position position="55"/>
    </location>
    <ligand>
        <name>ATP</name>
        <dbReference type="ChEBI" id="CHEBI:30616"/>
    </ligand>
</feature>
<feature type="binding site" evidence="1">
    <location>
        <position position="55"/>
    </location>
    <ligand>
        <name>Mg(2+)</name>
        <dbReference type="ChEBI" id="CHEBI:18420"/>
    </ligand>
</feature>
<feature type="binding site" evidence="1">
    <location>
        <begin position="116"/>
        <end position="119"/>
    </location>
    <ligand>
        <name>ATP</name>
        <dbReference type="ChEBI" id="CHEBI:30616"/>
    </ligand>
</feature>
<feature type="binding site" evidence="1">
    <location>
        <position position="116"/>
    </location>
    <ligand>
        <name>Mg(2+)</name>
        <dbReference type="ChEBI" id="CHEBI:18420"/>
    </ligand>
</feature>
<feature type="binding site" evidence="1">
    <location>
        <begin position="214"/>
        <end position="216"/>
    </location>
    <ligand>
        <name>ATP</name>
        <dbReference type="ChEBI" id="CHEBI:30616"/>
    </ligand>
</feature>